<evidence type="ECO:0000255" key="1">
    <source>
        <dbReference type="HAMAP-Rule" id="MF_00451"/>
    </source>
</evidence>
<keyword id="KW-0067">ATP-binding</keyword>
<keyword id="KW-0963">Cytoplasm</keyword>
<keyword id="KW-0418">Kinase</keyword>
<keyword id="KW-0460">Magnesium</keyword>
<keyword id="KW-0479">Metal-binding</keyword>
<keyword id="KW-0546">Nucleotide metabolism</keyword>
<keyword id="KW-0547">Nucleotide-binding</keyword>
<keyword id="KW-0597">Phosphoprotein</keyword>
<keyword id="KW-1185">Reference proteome</keyword>
<keyword id="KW-0808">Transferase</keyword>
<gene>
    <name evidence="1" type="primary">ndk</name>
    <name type="ordered locus">AZC_4155</name>
</gene>
<dbReference type="EC" id="2.7.4.6" evidence="1"/>
<dbReference type="EMBL" id="AP009384">
    <property type="protein sequence ID" value="BAF90153.1"/>
    <property type="molecule type" value="Genomic_DNA"/>
</dbReference>
<dbReference type="RefSeq" id="WP_012172675.1">
    <property type="nucleotide sequence ID" value="NC_009937.1"/>
</dbReference>
<dbReference type="SMR" id="A8HS90"/>
<dbReference type="STRING" id="438753.AZC_4155"/>
<dbReference type="KEGG" id="azc:AZC_4155"/>
<dbReference type="eggNOG" id="COG0105">
    <property type="taxonomic scope" value="Bacteria"/>
</dbReference>
<dbReference type="HOGENOM" id="CLU_060216_8_1_5"/>
<dbReference type="Proteomes" id="UP000000270">
    <property type="component" value="Chromosome"/>
</dbReference>
<dbReference type="GO" id="GO:0005737">
    <property type="term" value="C:cytoplasm"/>
    <property type="evidence" value="ECO:0007669"/>
    <property type="project" value="UniProtKB-SubCell"/>
</dbReference>
<dbReference type="GO" id="GO:0005524">
    <property type="term" value="F:ATP binding"/>
    <property type="evidence" value="ECO:0007669"/>
    <property type="project" value="UniProtKB-UniRule"/>
</dbReference>
<dbReference type="GO" id="GO:0046872">
    <property type="term" value="F:metal ion binding"/>
    <property type="evidence" value="ECO:0007669"/>
    <property type="project" value="UniProtKB-KW"/>
</dbReference>
<dbReference type="GO" id="GO:0004550">
    <property type="term" value="F:nucleoside diphosphate kinase activity"/>
    <property type="evidence" value="ECO:0007669"/>
    <property type="project" value="UniProtKB-UniRule"/>
</dbReference>
<dbReference type="GO" id="GO:0006241">
    <property type="term" value="P:CTP biosynthetic process"/>
    <property type="evidence" value="ECO:0007669"/>
    <property type="project" value="UniProtKB-UniRule"/>
</dbReference>
<dbReference type="GO" id="GO:0006183">
    <property type="term" value="P:GTP biosynthetic process"/>
    <property type="evidence" value="ECO:0007669"/>
    <property type="project" value="UniProtKB-UniRule"/>
</dbReference>
<dbReference type="GO" id="GO:0006228">
    <property type="term" value="P:UTP biosynthetic process"/>
    <property type="evidence" value="ECO:0007669"/>
    <property type="project" value="UniProtKB-UniRule"/>
</dbReference>
<dbReference type="CDD" id="cd04413">
    <property type="entry name" value="NDPk_I"/>
    <property type="match status" value="1"/>
</dbReference>
<dbReference type="FunFam" id="3.30.70.141:FF:000001">
    <property type="entry name" value="Nucleoside diphosphate kinase"/>
    <property type="match status" value="1"/>
</dbReference>
<dbReference type="Gene3D" id="3.30.70.141">
    <property type="entry name" value="Nucleoside diphosphate kinase-like domain"/>
    <property type="match status" value="1"/>
</dbReference>
<dbReference type="HAMAP" id="MF_00451">
    <property type="entry name" value="NDP_kinase"/>
    <property type="match status" value="1"/>
</dbReference>
<dbReference type="InterPro" id="IPR034907">
    <property type="entry name" value="NDK-like_dom"/>
</dbReference>
<dbReference type="InterPro" id="IPR036850">
    <property type="entry name" value="NDK-like_dom_sf"/>
</dbReference>
<dbReference type="InterPro" id="IPR001564">
    <property type="entry name" value="Nucleoside_diP_kinase"/>
</dbReference>
<dbReference type="InterPro" id="IPR023005">
    <property type="entry name" value="Nucleoside_diP_kinase_AS"/>
</dbReference>
<dbReference type="NCBIfam" id="NF001908">
    <property type="entry name" value="PRK00668.1"/>
    <property type="match status" value="1"/>
</dbReference>
<dbReference type="PANTHER" id="PTHR46161">
    <property type="entry name" value="NUCLEOSIDE DIPHOSPHATE KINASE"/>
    <property type="match status" value="1"/>
</dbReference>
<dbReference type="PANTHER" id="PTHR46161:SF3">
    <property type="entry name" value="NUCLEOSIDE DIPHOSPHATE KINASE DDB_G0292928-RELATED"/>
    <property type="match status" value="1"/>
</dbReference>
<dbReference type="Pfam" id="PF00334">
    <property type="entry name" value="NDK"/>
    <property type="match status" value="1"/>
</dbReference>
<dbReference type="PRINTS" id="PR01243">
    <property type="entry name" value="NUCDPKINASE"/>
</dbReference>
<dbReference type="SMART" id="SM00562">
    <property type="entry name" value="NDK"/>
    <property type="match status" value="1"/>
</dbReference>
<dbReference type="SUPFAM" id="SSF54919">
    <property type="entry name" value="Nucleoside diphosphate kinase, NDK"/>
    <property type="match status" value="1"/>
</dbReference>
<dbReference type="PROSITE" id="PS00469">
    <property type="entry name" value="NDPK"/>
    <property type="match status" value="1"/>
</dbReference>
<dbReference type="PROSITE" id="PS51374">
    <property type="entry name" value="NDPK_LIKE"/>
    <property type="match status" value="1"/>
</dbReference>
<proteinExistence type="inferred from homology"/>
<accession>A8HS90</accession>
<organism>
    <name type="scientific">Azorhizobium caulinodans (strain ATCC 43989 / DSM 5975 / JCM 20966 / LMG 6465 / NBRC 14845 / NCIMB 13405 / ORS 571)</name>
    <dbReference type="NCBI Taxonomy" id="438753"/>
    <lineage>
        <taxon>Bacteria</taxon>
        <taxon>Pseudomonadati</taxon>
        <taxon>Pseudomonadota</taxon>
        <taxon>Alphaproteobacteria</taxon>
        <taxon>Hyphomicrobiales</taxon>
        <taxon>Xanthobacteraceae</taxon>
        <taxon>Azorhizobium</taxon>
    </lineage>
</organism>
<feature type="chain" id="PRO_1000072359" description="Nucleoside diphosphate kinase">
    <location>
        <begin position="1"/>
        <end position="140"/>
    </location>
</feature>
<feature type="active site" description="Pros-phosphohistidine intermediate" evidence="1">
    <location>
        <position position="117"/>
    </location>
</feature>
<feature type="binding site" evidence="1">
    <location>
        <position position="11"/>
    </location>
    <ligand>
        <name>ATP</name>
        <dbReference type="ChEBI" id="CHEBI:30616"/>
    </ligand>
</feature>
<feature type="binding site" evidence="1">
    <location>
        <position position="59"/>
    </location>
    <ligand>
        <name>ATP</name>
        <dbReference type="ChEBI" id="CHEBI:30616"/>
    </ligand>
</feature>
<feature type="binding site" evidence="1">
    <location>
        <position position="87"/>
    </location>
    <ligand>
        <name>ATP</name>
        <dbReference type="ChEBI" id="CHEBI:30616"/>
    </ligand>
</feature>
<feature type="binding site" evidence="1">
    <location>
        <position position="93"/>
    </location>
    <ligand>
        <name>ATP</name>
        <dbReference type="ChEBI" id="CHEBI:30616"/>
    </ligand>
</feature>
<feature type="binding site" evidence="1">
    <location>
        <position position="104"/>
    </location>
    <ligand>
        <name>ATP</name>
        <dbReference type="ChEBI" id="CHEBI:30616"/>
    </ligand>
</feature>
<feature type="binding site" evidence="1">
    <location>
        <position position="114"/>
    </location>
    <ligand>
        <name>ATP</name>
        <dbReference type="ChEBI" id="CHEBI:30616"/>
    </ligand>
</feature>
<reference key="1">
    <citation type="submission" date="2007-04" db="EMBL/GenBank/DDBJ databases">
        <title>Complete genome sequence of the nitrogen-fixing bacterium Azorhizobium caulinodans ORS571.</title>
        <authorList>
            <person name="Lee K.B."/>
            <person name="Backer P.D."/>
            <person name="Aono T."/>
            <person name="Liu C.T."/>
            <person name="Suzuki S."/>
            <person name="Suzuki T."/>
            <person name="Kaneko T."/>
            <person name="Yamada M."/>
            <person name="Tabata S."/>
            <person name="Kupfer D.M."/>
            <person name="Najar F.Z."/>
            <person name="Wiley G.B."/>
            <person name="Roe B."/>
            <person name="Binnewies T."/>
            <person name="Ussery D."/>
            <person name="Vereecke D."/>
            <person name="Gevers D."/>
            <person name="Holsters M."/>
            <person name="Oyaizu H."/>
        </authorList>
    </citation>
    <scope>NUCLEOTIDE SEQUENCE [LARGE SCALE GENOMIC DNA]</scope>
    <source>
        <strain>ATCC 43989 / DSM 5975 / JCM 20966 / LMG 6465 / NBRC 14845 / NCIMB 13405 / ORS 571</strain>
    </source>
</reference>
<name>NDK_AZOC5</name>
<comment type="function">
    <text evidence="1">Major role in the synthesis of nucleoside triphosphates other than ATP. The ATP gamma phosphate is transferred to the NDP beta phosphate via a ping-pong mechanism, using a phosphorylated active-site intermediate.</text>
</comment>
<comment type="catalytic activity">
    <reaction evidence="1">
        <text>a 2'-deoxyribonucleoside 5'-diphosphate + ATP = a 2'-deoxyribonucleoside 5'-triphosphate + ADP</text>
        <dbReference type="Rhea" id="RHEA:44640"/>
        <dbReference type="ChEBI" id="CHEBI:30616"/>
        <dbReference type="ChEBI" id="CHEBI:61560"/>
        <dbReference type="ChEBI" id="CHEBI:73316"/>
        <dbReference type="ChEBI" id="CHEBI:456216"/>
        <dbReference type="EC" id="2.7.4.6"/>
    </reaction>
</comment>
<comment type="catalytic activity">
    <reaction evidence="1">
        <text>a ribonucleoside 5'-diphosphate + ATP = a ribonucleoside 5'-triphosphate + ADP</text>
        <dbReference type="Rhea" id="RHEA:18113"/>
        <dbReference type="ChEBI" id="CHEBI:30616"/>
        <dbReference type="ChEBI" id="CHEBI:57930"/>
        <dbReference type="ChEBI" id="CHEBI:61557"/>
        <dbReference type="ChEBI" id="CHEBI:456216"/>
        <dbReference type="EC" id="2.7.4.6"/>
    </reaction>
</comment>
<comment type="cofactor">
    <cofactor evidence="1">
        <name>Mg(2+)</name>
        <dbReference type="ChEBI" id="CHEBI:18420"/>
    </cofactor>
</comment>
<comment type="subunit">
    <text evidence="1">Homotetramer.</text>
</comment>
<comment type="subcellular location">
    <subcellularLocation>
        <location evidence="1">Cytoplasm</location>
    </subcellularLocation>
</comment>
<comment type="similarity">
    <text evidence="1">Belongs to the NDK family.</text>
</comment>
<sequence length="140" mass="15087">MAIERTFSIIKPDATRRNLTGAINAVIEKAGLRIVAQKRIQMTKAQAEAFYAVHSARPFFNDLVSFMTSGPVVVQVLEGEDAVAKYREVMGATNPANAAEGTIRKLFAESIEANSAHGSDSVENAGVEIAQFFSQNEIVG</sequence>
<protein>
    <recommendedName>
        <fullName evidence="1">Nucleoside diphosphate kinase</fullName>
        <shortName evidence="1">NDK</shortName>
        <shortName evidence="1">NDP kinase</shortName>
        <ecNumber evidence="1">2.7.4.6</ecNumber>
    </recommendedName>
    <alternativeName>
        <fullName evidence="1">Nucleoside-2-P kinase</fullName>
    </alternativeName>
</protein>